<keyword id="KW-0520">NAD</keyword>
<keyword id="KW-0560">Oxidoreductase</keyword>
<accession>Q2FK94</accession>
<organism>
    <name type="scientific">Staphylococcus aureus (strain USA300)</name>
    <dbReference type="NCBI Taxonomy" id="367830"/>
    <lineage>
        <taxon>Bacteria</taxon>
        <taxon>Bacillati</taxon>
        <taxon>Bacillota</taxon>
        <taxon>Bacilli</taxon>
        <taxon>Bacillales</taxon>
        <taxon>Staphylococcaceae</taxon>
        <taxon>Staphylococcus</taxon>
    </lineage>
</organism>
<gene>
    <name type="primary">aldA</name>
    <name type="ordered locus">SAUSA300_0170</name>
</gene>
<protein>
    <recommendedName>
        <fullName>Putative aldehyde dehydrogenase AldA</fullName>
        <ecNumber>1.2.1.3</ecNumber>
    </recommendedName>
</protein>
<proteinExistence type="inferred from homology"/>
<sequence length="495" mass="53659">MAVNVRDYIAENYGLFINGEFVKGSSDETIEVTNPATGETLSHITRAKDKDVDHAVKVAQEAFESWSLTSKSERAQMLRDIGDKLMAQKDKIAMIETLNNGKPIRETTAIDIPFAARHFHYFASVIETEEGTVNDIDKDTMSIVRHEPIGVVGAVVAWNFPMLLAAWKIAPAIAAGNTIVIQPSSSTPLSLLEVAKIFQEVLPKGVVNILTGKGSESGNAIFNHDGVDKLSFTGSTDVGYQVAEAAAKHLVPATLELGGKSANIILDDANLDLAVEGIQLGILFNQGEVCSAGSRLLVHEKIYDQLVPRLQEAFSNIKVGNPQDEATQMGSQTGKDQLDKIQSYIDAAKESDAQILAGGHRLTENGLDKGFFFEPTLIAVPDNHHKLAQEEIFGPVLTVIKVKDDQEAIDIANDSEYGLAGGVFSQNITRALNIAKAVRTGRIWINTYNQVPEGAPFGGYKKSGIGRETYKGALSNYQQVKNIYIDTSNALKGLY</sequence>
<name>ALDA_STAA3</name>
<evidence type="ECO:0000250" key="1"/>
<evidence type="ECO:0000305" key="2"/>
<reference key="1">
    <citation type="journal article" date="2006" name="Lancet">
        <title>Complete genome sequence of USA300, an epidemic clone of community-acquired meticillin-resistant Staphylococcus aureus.</title>
        <authorList>
            <person name="Diep B.A."/>
            <person name="Gill S.R."/>
            <person name="Chang R.F."/>
            <person name="Phan T.H."/>
            <person name="Chen J.H."/>
            <person name="Davidson M.G."/>
            <person name="Lin F."/>
            <person name="Lin J."/>
            <person name="Carleton H.A."/>
            <person name="Mongodin E.F."/>
            <person name="Sensabaugh G.F."/>
            <person name="Perdreau-Remington F."/>
        </authorList>
    </citation>
    <scope>NUCLEOTIDE SEQUENCE [LARGE SCALE GENOMIC DNA]</scope>
    <source>
        <strain>USA300</strain>
    </source>
</reference>
<dbReference type="EC" id="1.2.1.3"/>
<dbReference type="EMBL" id="CP000255">
    <property type="protein sequence ID" value="ABD21998.1"/>
    <property type="molecule type" value="Genomic_DNA"/>
</dbReference>
<dbReference type="RefSeq" id="WP_000290400.1">
    <property type="nucleotide sequence ID" value="NZ_CP027476.1"/>
</dbReference>
<dbReference type="SMR" id="Q2FK94"/>
<dbReference type="KEGG" id="saa:SAUSA300_0170"/>
<dbReference type="HOGENOM" id="CLU_005391_0_2_9"/>
<dbReference type="OMA" id="WSNTFNK"/>
<dbReference type="Proteomes" id="UP000001939">
    <property type="component" value="Chromosome"/>
</dbReference>
<dbReference type="GO" id="GO:0004029">
    <property type="term" value="F:aldehyde dehydrogenase (NAD+) activity"/>
    <property type="evidence" value="ECO:0007669"/>
    <property type="project" value="UniProtKB-EC"/>
</dbReference>
<dbReference type="CDD" id="cd07117">
    <property type="entry name" value="ALDH_StaphAldA1"/>
    <property type="match status" value="1"/>
</dbReference>
<dbReference type="FunFam" id="3.40.309.10:FF:000012">
    <property type="entry name" value="Betaine aldehyde dehydrogenase"/>
    <property type="match status" value="1"/>
</dbReference>
<dbReference type="FunFam" id="3.40.605.10:FF:000007">
    <property type="entry name" value="NAD/NADP-dependent betaine aldehyde dehydrogenase"/>
    <property type="match status" value="1"/>
</dbReference>
<dbReference type="Gene3D" id="3.40.605.10">
    <property type="entry name" value="Aldehyde Dehydrogenase, Chain A, domain 1"/>
    <property type="match status" value="1"/>
</dbReference>
<dbReference type="Gene3D" id="3.40.309.10">
    <property type="entry name" value="Aldehyde Dehydrogenase, Chain A, domain 2"/>
    <property type="match status" value="1"/>
</dbReference>
<dbReference type="InterPro" id="IPR016161">
    <property type="entry name" value="Ald_DH/histidinol_DH"/>
</dbReference>
<dbReference type="InterPro" id="IPR016163">
    <property type="entry name" value="Ald_DH_C"/>
</dbReference>
<dbReference type="InterPro" id="IPR016160">
    <property type="entry name" value="Ald_DH_CS_CYS"/>
</dbReference>
<dbReference type="InterPro" id="IPR029510">
    <property type="entry name" value="Ald_DH_CS_GLU"/>
</dbReference>
<dbReference type="InterPro" id="IPR016162">
    <property type="entry name" value="Ald_DH_N"/>
</dbReference>
<dbReference type="InterPro" id="IPR015590">
    <property type="entry name" value="Aldehyde_DH_dom"/>
</dbReference>
<dbReference type="PANTHER" id="PTHR43111">
    <property type="entry name" value="ALDEHYDE DEHYDROGENASE B-RELATED"/>
    <property type="match status" value="1"/>
</dbReference>
<dbReference type="PANTHER" id="PTHR43111:SF1">
    <property type="entry name" value="ALDEHYDE DEHYDROGENASE B-RELATED"/>
    <property type="match status" value="1"/>
</dbReference>
<dbReference type="Pfam" id="PF00171">
    <property type="entry name" value="Aldedh"/>
    <property type="match status" value="1"/>
</dbReference>
<dbReference type="SUPFAM" id="SSF53720">
    <property type="entry name" value="ALDH-like"/>
    <property type="match status" value="1"/>
</dbReference>
<dbReference type="PROSITE" id="PS00070">
    <property type="entry name" value="ALDEHYDE_DEHYDR_CYS"/>
    <property type="match status" value="1"/>
</dbReference>
<dbReference type="PROSITE" id="PS00687">
    <property type="entry name" value="ALDEHYDE_DEHYDR_GLU"/>
    <property type="match status" value="1"/>
</dbReference>
<comment type="catalytic activity">
    <reaction>
        <text>an aldehyde + NAD(+) + H2O = a carboxylate + NADH + 2 H(+)</text>
        <dbReference type="Rhea" id="RHEA:16185"/>
        <dbReference type="ChEBI" id="CHEBI:15377"/>
        <dbReference type="ChEBI" id="CHEBI:15378"/>
        <dbReference type="ChEBI" id="CHEBI:17478"/>
        <dbReference type="ChEBI" id="CHEBI:29067"/>
        <dbReference type="ChEBI" id="CHEBI:57540"/>
        <dbReference type="ChEBI" id="CHEBI:57945"/>
        <dbReference type="EC" id="1.2.1.3"/>
    </reaction>
</comment>
<comment type="similarity">
    <text evidence="2">Belongs to the aldehyde dehydrogenase family.</text>
</comment>
<feature type="chain" id="PRO_0000290789" description="Putative aldehyde dehydrogenase AldA">
    <location>
        <begin position="1"/>
        <end position="495"/>
    </location>
</feature>
<feature type="active site" evidence="1">
    <location>
        <position position="256"/>
    </location>
</feature>
<feature type="active site" evidence="1">
    <location>
        <position position="290"/>
    </location>
</feature>
<feature type="binding site" evidence="1">
    <location>
        <begin position="212"/>
        <end position="218"/>
    </location>
    <ligand>
        <name>NAD(+)</name>
        <dbReference type="ChEBI" id="CHEBI:57540"/>
    </ligand>
</feature>